<reference key="1">
    <citation type="journal article" date="2003" name="Proc. Natl. Acad. Sci. U.S.A.">
        <title>The complete genome sequence of Chromobacterium violaceum reveals remarkable and exploitable bacterial adaptability.</title>
        <authorList>
            <person name="Vasconcelos A.T.R."/>
            <person name="de Almeida D.F."/>
            <person name="Hungria M."/>
            <person name="Guimaraes C.T."/>
            <person name="Antonio R.V."/>
            <person name="Almeida F.C."/>
            <person name="de Almeida L.G.P."/>
            <person name="de Almeida R."/>
            <person name="Alves-Gomes J.A."/>
            <person name="Andrade E.M."/>
            <person name="Araripe J."/>
            <person name="de Araujo M.F.F."/>
            <person name="Astolfi-Filho S."/>
            <person name="Azevedo V."/>
            <person name="Baptista A.J."/>
            <person name="Bataus L.A.M."/>
            <person name="Batista J.S."/>
            <person name="Belo A."/>
            <person name="van den Berg C."/>
            <person name="Bogo M."/>
            <person name="Bonatto S."/>
            <person name="Bordignon J."/>
            <person name="Brigido M.M."/>
            <person name="Brito C.A."/>
            <person name="Brocchi M."/>
            <person name="Burity H.A."/>
            <person name="Camargo A.A."/>
            <person name="Cardoso D.D.P."/>
            <person name="Carneiro N.P."/>
            <person name="Carraro D.M."/>
            <person name="Carvalho C.M.B."/>
            <person name="Cascardo J.C.M."/>
            <person name="Cavada B.S."/>
            <person name="Chueire L.M.O."/>
            <person name="Creczynski-Pasa T.B."/>
            <person name="Cunha-Junior N.C."/>
            <person name="Fagundes N."/>
            <person name="Falcao C.L."/>
            <person name="Fantinatti F."/>
            <person name="Farias I.P."/>
            <person name="Felipe M.S.S."/>
            <person name="Ferrari L.P."/>
            <person name="Ferro J.A."/>
            <person name="Ferro M.I.T."/>
            <person name="Franco G.R."/>
            <person name="Freitas N.S.A."/>
            <person name="Furlan L.R."/>
            <person name="Gazzinelli R.T."/>
            <person name="Gomes E.A."/>
            <person name="Goncalves P.R."/>
            <person name="Grangeiro T.B."/>
            <person name="Grattapaglia D."/>
            <person name="Grisard E.C."/>
            <person name="Hanna E.S."/>
            <person name="Jardim S.N."/>
            <person name="Laurino J."/>
            <person name="Leoi L.C.T."/>
            <person name="Lima L.F.A."/>
            <person name="Loureiro M.F."/>
            <person name="Lyra M.C.C.P."/>
            <person name="Madeira H.M.F."/>
            <person name="Manfio G.P."/>
            <person name="Maranhao A.Q."/>
            <person name="Martins W.S."/>
            <person name="di Mauro S.M.Z."/>
            <person name="de Medeiros S.R.B."/>
            <person name="Meissner R.V."/>
            <person name="Moreira M.A.M."/>
            <person name="Nascimento F.F."/>
            <person name="Nicolas M.F."/>
            <person name="Oliveira J.G."/>
            <person name="Oliveira S.C."/>
            <person name="Paixao R.F.C."/>
            <person name="Parente J.A."/>
            <person name="Pedrosa F.O."/>
            <person name="Pena S.D.J."/>
            <person name="Pereira J.O."/>
            <person name="Pereira M."/>
            <person name="Pinto L.S.R.C."/>
            <person name="Pinto L.S."/>
            <person name="Porto J.I.R."/>
            <person name="Potrich D.P."/>
            <person name="Ramalho-Neto C.E."/>
            <person name="Reis A.M.M."/>
            <person name="Rigo L.U."/>
            <person name="Rondinelli E."/>
            <person name="Santos E.B.P."/>
            <person name="Santos F.R."/>
            <person name="Schneider M.P.C."/>
            <person name="Seuanez H.N."/>
            <person name="Silva A.M.R."/>
            <person name="da Silva A.L.C."/>
            <person name="Silva D.W."/>
            <person name="Silva R."/>
            <person name="Simoes I.C."/>
            <person name="Simon D."/>
            <person name="Soares C.M.A."/>
            <person name="Soares R.B.A."/>
            <person name="Souza E.M."/>
            <person name="Souza K.R.L."/>
            <person name="Souza R.C."/>
            <person name="Steffens M.B.R."/>
            <person name="Steindel M."/>
            <person name="Teixeira S.R."/>
            <person name="Urmenyi T."/>
            <person name="Vettore A."/>
            <person name="Wassem R."/>
            <person name="Zaha A."/>
            <person name="Simpson A.J.G."/>
        </authorList>
    </citation>
    <scope>NUCLEOTIDE SEQUENCE [LARGE SCALE GENOMIC DNA]</scope>
    <source>
        <strain>ATCC 12472 / DSM 30191 / JCM 1249 / CCUG 213 / NBRC 12614 / NCIMB 9131 / NCTC 9757 / MK</strain>
    </source>
</reference>
<sequence>MGDRLYIFDTTLRDGEQSPGASMSKEEKIRIARQLERLGVDIIEAGFAAASPGDFDAIHAIAETIKDSTVCSLARANERDVRAAGEAIKPAARGRIHTFIATSPIHMEKKLRMSPDEVVDAAVKAVKIAREYTDDVEFSAEDALRSDIDFLARIFGEVIKAGATTLNVPDTVGYAVPRLTEAFFRELIARTPGGDKVVWSAHCHNDLGMAVANSLAAVLGGARQVECTINGLGERAGNASLEEVVMAVKTRRDVFGVDSRVDATQIVPASKLVSTVTGYPVQPNKAIVGANAFAHESGIHQDGVLKHRETYEIMSAESVGWSANRLTLGKLSGRNAFKTKLSELGIVLDSEEALNAAFARFKELADKKREIFDEDLHALVSDEMVTIEREDYKLVSLKVVSETGEPPLASIVFVEHGQEQHGESSGSGPVDAAFKAIEKVVGSGAELELYSVNAITKGTESQGEVTVRLSREGRIVNGQGADTDIIVASAKAYLSALNKLTIEEKMNAQAAA</sequence>
<dbReference type="EC" id="2.3.3.13" evidence="1"/>
<dbReference type="EMBL" id="AE016825">
    <property type="protein sequence ID" value="AAQ58271.2"/>
    <property type="molecule type" value="Genomic_DNA"/>
</dbReference>
<dbReference type="SMR" id="Q7P0H2"/>
<dbReference type="STRING" id="243365.CV_0595"/>
<dbReference type="KEGG" id="cvi:CV_0595"/>
<dbReference type="eggNOG" id="COG0119">
    <property type="taxonomic scope" value="Bacteria"/>
</dbReference>
<dbReference type="HOGENOM" id="CLU_022158_0_1_4"/>
<dbReference type="UniPathway" id="UPA00048">
    <property type="reaction ID" value="UER00070"/>
</dbReference>
<dbReference type="Proteomes" id="UP000001424">
    <property type="component" value="Chromosome"/>
</dbReference>
<dbReference type="GO" id="GO:0005829">
    <property type="term" value="C:cytosol"/>
    <property type="evidence" value="ECO:0007669"/>
    <property type="project" value="TreeGrafter"/>
</dbReference>
<dbReference type="GO" id="GO:0003852">
    <property type="term" value="F:2-isopropylmalate synthase activity"/>
    <property type="evidence" value="ECO:0007669"/>
    <property type="project" value="UniProtKB-UniRule"/>
</dbReference>
<dbReference type="GO" id="GO:0003985">
    <property type="term" value="F:acetyl-CoA C-acetyltransferase activity"/>
    <property type="evidence" value="ECO:0007669"/>
    <property type="project" value="UniProtKB-UniRule"/>
</dbReference>
<dbReference type="GO" id="GO:0030145">
    <property type="term" value="F:manganese ion binding"/>
    <property type="evidence" value="ECO:0007669"/>
    <property type="project" value="UniProtKB-UniRule"/>
</dbReference>
<dbReference type="GO" id="GO:0009098">
    <property type="term" value="P:L-leucine biosynthetic process"/>
    <property type="evidence" value="ECO:0007669"/>
    <property type="project" value="UniProtKB-UniRule"/>
</dbReference>
<dbReference type="CDD" id="cd07940">
    <property type="entry name" value="DRE_TIM_IPMS"/>
    <property type="match status" value="1"/>
</dbReference>
<dbReference type="FunFam" id="1.10.238.260:FF:000001">
    <property type="entry name" value="2-isopropylmalate synthase"/>
    <property type="match status" value="1"/>
</dbReference>
<dbReference type="FunFam" id="3.20.20.70:FF:000010">
    <property type="entry name" value="2-isopropylmalate synthase"/>
    <property type="match status" value="1"/>
</dbReference>
<dbReference type="FunFam" id="3.30.160.270:FF:000003">
    <property type="entry name" value="2-isopropylmalate synthase"/>
    <property type="match status" value="1"/>
</dbReference>
<dbReference type="Gene3D" id="1.10.238.260">
    <property type="match status" value="1"/>
</dbReference>
<dbReference type="Gene3D" id="3.30.160.270">
    <property type="match status" value="1"/>
</dbReference>
<dbReference type="Gene3D" id="3.20.20.70">
    <property type="entry name" value="Aldolase class I"/>
    <property type="match status" value="1"/>
</dbReference>
<dbReference type="HAMAP" id="MF_01025">
    <property type="entry name" value="LeuA_type1"/>
    <property type="match status" value="1"/>
</dbReference>
<dbReference type="InterPro" id="IPR050073">
    <property type="entry name" value="2-IPM_HCS-like"/>
</dbReference>
<dbReference type="InterPro" id="IPR013709">
    <property type="entry name" value="2-isopropylmalate_synth_dimer"/>
</dbReference>
<dbReference type="InterPro" id="IPR002034">
    <property type="entry name" value="AIPM/Hcit_synth_CS"/>
</dbReference>
<dbReference type="InterPro" id="IPR013785">
    <property type="entry name" value="Aldolase_TIM"/>
</dbReference>
<dbReference type="InterPro" id="IPR054691">
    <property type="entry name" value="LeuA/HCS_post-cat"/>
</dbReference>
<dbReference type="InterPro" id="IPR036230">
    <property type="entry name" value="LeuA_allosteric_dom_sf"/>
</dbReference>
<dbReference type="InterPro" id="IPR005671">
    <property type="entry name" value="LeuA_bact_synth"/>
</dbReference>
<dbReference type="InterPro" id="IPR000891">
    <property type="entry name" value="PYR_CT"/>
</dbReference>
<dbReference type="NCBIfam" id="TIGR00973">
    <property type="entry name" value="leuA_bact"/>
    <property type="match status" value="1"/>
</dbReference>
<dbReference type="NCBIfam" id="NF002086">
    <property type="entry name" value="PRK00915.1-3"/>
    <property type="match status" value="1"/>
</dbReference>
<dbReference type="NCBIfam" id="NF002087">
    <property type="entry name" value="PRK00915.1-4"/>
    <property type="match status" value="1"/>
</dbReference>
<dbReference type="PANTHER" id="PTHR10277:SF9">
    <property type="entry name" value="2-ISOPROPYLMALATE SYNTHASE 1, CHLOROPLASTIC-RELATED"/>
    <property type="match status" value="1"/>
</dbReference>
<dbReference type="PANTHER" id="PTHR10277">
    <property type="entry name" value="HOMOCITRATE SYNTHASE-RELATED"/>
    <property type="match status" value="1"/>
</dbReference>
<dbReference type="Pfam" id="PF22617">
    <property type="entry name" value="HCS_D2"/>
    <property type="match status" value="1"/>
</dbReference>
<dbReference type="Pfam" id="PF00682">
    <property type="entry name" value="HMGL-like"/>
    <property type="match status" value="1"/>
</dbReference>
<dbReference type="Pfam" id="PF08502">
    <property type="entry name" value="LeuA_dimer"/>
    <property type="match status" value="1"/>
</dbReference>
<dbReference type="SMART" id="SM00917">
    <property type="entry name" value="LeuA_dimer"/>
    <property type="match status" value="1"/>
</dbReference>
<dbReference type="SUPFAM" id="SSF110921">
    <property type="entry name" value="2-isopropylmalate synthase LeuA, allosteric (dimerisation) domain"/>
    <property type="match status" value="1"/>
</dbReference>
<dbReference type="SUPFAM" id="SSF51569">
    <property type="entry name" value="Aldolase"/>
    <property type="match status" value="1"/>
</dbReference>
<dbReference type="PROSITE" id="PS00815">
    <property type="entry name" value="AIPM_HOMOCIT_SYNTH_1"/>
    <property type="match status" value="1"/>
</dbReference>
<dbReference type="PROSITE" id="PS00816">
    <property type="entry name" value="AIPM_HOMOCIT_SYNTH_2"/>
    <property type="match status" value="1"/>
</dbReference>
<dbReference type="PROSITE" id="PS50991">
    <property type="entry name" value="PYR_CT"/>
    <property type="match status" value="1"/>
</dbReference>
<proteinExistence type="inferred from homology"/>
<comment type="function">
    <text evidence="1">Catalyzes the condensation of the acetyl group of acetyl-CoA with 3-methyl-2-oxobutanoate (2-ketoisovalerate) to form 3-carboxy-3-hydroxy-4-methylpentanoate (2-isopropylmalate).</text>
</comment>
<comment type="catalytic activity">
    <reaction evidence="1">
        <text>3-methyl-2-oxobutanoate + acetyl-CoA + H2O = (2S)-2-isopropylmalate + CoA + H(+)</text>
        <dbReference type="Rhea" id="RHEA:21524"/>
        <dbReference type="ChEBI" id="CHEBI:1178"/>
        <dbReference type="ChEBI" id="CHEBI:11851"/>
        <dbReference type="ChEBI" id="CHEBI:15377"/>
        <dbReference type="ChEBI" id="CHEBI:15378"/>
        <dbReference type="ChEBI" id="CHEBI:57287"/>
        <dbReference type="ChEBI" id="CHEBI:57288"/>
        <dbReference type="EC" id="2.3.3.13"/>
    </reaction>
</comment>
<comment type="cofactor">
    <cofactor evidence="1">
        <name>Mn(2+)</name>
        <dbReference type="ChEBI" id="CHEBI:29035"/>
    </cofactor>
</comment>
<comment type="pathway">
    <text evidence="1">Amino-acid biosynthesis; L-leucine biosynthesis; L-leucine from 3-methyl-2-oxobutanoate: step 1/4.</text>
</comment>
<comment type="subunit">
    <text evidence="1">Homodimer.</text>
</comment>
<comment type="subcellular location">
    <subcellularLocation>
        <location evidence="1">Cytoplasm</location>
    </subcellularLocation>
</comment>
<comment type="similarity">
    <text evidence="1">Belongs to the alpha-IPM synthase/homocitrate synthase family. LeuA type 1 subfamily.</text>
</comment>
<feature type="chain" id="PRO_0000140349" description="2-isopropylmalate synthase">
    <location>
        <begin position="1"/>
        <end position="512"/>
    </location>
</feature>
<feature type="domain" description="Pyruvate carboxyltransferase" evidence="1">
    <location>
        <begin position="5"/>
        <end position="267"/>
    </location>
</feature>
<feature type="region of interest" description="Regulatory domain" evidence="1">
    <location>
        <begin position="393"/>
        <end position="512"/>
    </location>
</feature>
<feature type="binding site" evidence="1">
    <location>
        <position position="14"/>
    </location>
    <ligand>
        <name>Mn(2+)</name>
        <dbReference type="ChEBI" id="CHEBI:29035"/>
    </ligand>
</feature>
<feature type="binding site" evidence="1">
    <location>
        <position position="202"/>
    </location>
    <ligand>
        <name>Mn(2+)</name>
        <dbReference type="ChEBI" id="CHEBI:29035"/>
    </ligand>
</feature>
<feature type="binding site" evidence="1">
    <location>
        <position position="204"/>
    </location>
    <ligand>
        <name>Mn(2+)</name>
        <dbReference type="ChEBI" id="CHEBI:29035"/>
    </ligand>
</feature>
<feature type="binding site" evidence="1">
    <location>
        <position position="238"/>
    </location>
    <ligand>
        <name>Mn(2+)</name>
        <dbReference type="ChEBI" id="CHEBI:29035"/>
    </ligand>
</feature>
<accession>Q7P0H2</accession>
<name>LEU1_CHRVO</name>
<keyword id="KW-0028">Amino-acid biosynthesis</keyword>
<keyword id="KW-0100">Branched-chain amino acid biosynthesis</keyword>
<keyword id="KW-0963">Cytoplasm</keyword>
<keyword id="KW-0432">Leucine biosynthesis</keyword>
<keyword id="KW-0464">Manganese</keyword>
<keyword id="KW-0479">Metal-binding</keyword>
<keyword id="KW-1185">Reference proteome</keyword>
<keyword id="KW-0808">Transferase</keyword>
<protein>
    <recommendedName>
        <fullName evidence="1">2-isopropylmalate synthase</fullName>
        <ecNumber evidence="1">2.3.3.13</ecNumber>
    </recommendedName>
    <alternativeName>
        <fullName evidence="1">Alpha-IPM synthase</fullName>
    </alternativeName>
    <alternativeName>
        <fullName evidence="1">Alpha-isopropylmalate synthase</fullName>
    </alternativeName>
</protein>
<gene>
    <name evidence="1" type="primary">leuA</name>
    <name type="ordered locus">CV_0595</name>
</gene>
<organism>
    <name type="scientific">Chromobacterium violaceum (strain ATCC 12472 / DSM 30191 / JCM 1249 / CCUG 213 / NBRC 12614 / NCIMB 9131 / NCTC 9757 / MK)</name>
    <dbReference type="NCBI Taxonomy" id="243365"/>
    <lineage>
        <taxon>Bacteria</taxon>
        <taxon>Pseudomonadati</taxon>
        <taxon>Pseudomonadota</taxon>
        <taxon>Betaproteobacteria</taxon>
        <taxon>Neisseriales</taxon>
        <taxon>Chromobacteriaceae</taxon>
        <taxon>Chromobacterium</taxon>
    </lineage>
</organism>
<evidence type="ECO:0000255" key="1">
    <source>
        <dbReference type="HAMAP-Rule" id="MF_01025"/>
    </source>
</evidence>